<protein>
    <recommendedName>
        <fullName evidence="1">Acyl carrier protein</fullName>
        <shortName evidence="1">ACP</shortName>
    </recommendedName>
</protein>
<proteinExistence type="inferred from homology"/>
<gene>
    <name evidence="1" type="primary">acpP</name>
    <name type="ordered locus">Cpar_0128</name>
</gene>
<accession>B3QRN4</accession>
<sequence length="79" mass="8762">MSAAEIKDKVYDIIVSKMGVNKDQITPESKFADDLGADSLDTVELIMELENEFGVQIPDEDAEKIGTVQQAIDYIVNKK</sequence>
<name>ACP_CHLP8</name>
<comment type="function">
    <text evidence="1">Carrier of the growing fatty acid chain in fatty acid biosynthesis.</text>
</comment>
<comment type="pathway">
    <text evidence="1">Lipid metabolism; fatty acid biosynthesis.</text>
</comment>
<comment type="subcellular location">
    <subcellularLocation>
        <location evidence="1">Cytoplasm</location>
    </subcellularLocation>
</comment>
<comment type="PTM">
    <text evidence="1">4'-phosphopantetheine is transferred from CoA to a specific serine of apo-ACP by AcpS. This modification is essential for activity because fatty acids are bound in thioester linkage to the sulfhydryl of the prosthetic group.</text>
</comment>
<comment type="similarity">
    <text evidence="1">Belongs to the acyl carrier protein (ACP) family.</text>
</comment>
<dbReference type="EMBL" id="CP001099">
    <property type="protein sequence ID" value="ACF10556.1"/>
    <property type="molecule type" value="Genomic_DNA"/>
</dbReference>
<dbReference type="RefSeq" id="WP_012501391.1">
    <property type="nucleotide sequence ID" value="NC_011027.1"/>
</dbReference>
<dbReference type="SMR" id="B3QRN4"/>
<dbReference type="STRING" id="517417.Cpar_0128"/>
<dbReference type="KEGG" id="cpc:Cpar_0128"/>
<dbReference type="eggNOG" id="COG0236">
    <property type="taxonomic scope" value="Bacteria"/>
</dbReference>
<dbReference type="HOGENOM" id="CLU_108696_5_1_10"/>
<dbReference type="OrthoDB" id="9804551at2"/>
<dbReference type="UniPathway" id="UPA00094"/>
<dbReference type="Proteomes" id="UP000008811">
    <property type="component" value="Chromosome"/>
</dbReference>
<dbReference type="GO" id="GO:0005829">
    <property type="term" value="C:cytosol"/>
    <property type="evidence" value="ECO:0007669"/>
    <property type="project" value="TreeGrafter"/>
</dbReference>
<dbReference type="GO" id="GO:0016020">
    <property type="term" value="C:membrane"/>
    <property type="evidence" value="ECO:0007669"/>
    <property type="project" value="GOC"/>
</dbReference>
<dbReference type="GO" id="GO:0000035">
    <property type="term" value="F:acyl binding"/>
    <property type="evidence" value="ECO:0007669"/>
    <property type="project" value="TreeGrafter"/>
</dbReference>
<dbReference type="GO" id="GO:0000036">
    <property type="term" value="F:acyl carrier activity"/>
    <property type="evidence" value="ECO:0007669"/>
    <property type="project" value="UniProtKB-UniRule"/>
</dbReference>
<dbReference type="GO" id="GO:0009245">
    <property type="term" value="P:lipid A biosynthetic process"/>
    <property type="evidence" value="ECO:0007669"/>
    <property type="project" value="TreeGrafter"/>
</dbReference>
<dbReference type="FunFam" id="1.10.1200.10:FF:000001">
    <property type="entry name" value="Acyl carrier protein"/>
    <property type="match status" value="1"/>
</dbReference>
<dbReference type="Gene3D" id="1.10.1200.10">
    <property type="entry name" value="ACP-like"/>
    <property type="match status" value="1"/>
</dbReference>
<dbReference type="HAMAP" id="MF_01217">
    <property type="entry name" value="Acyl_carrier"/>
    <property type="match status" value="1"/>
</dbReference>
<dbReference type="InterPro" id="IPR003231">
    <property type="entry name" value="ACP"/>
</dbReference>
<dbReference type="InterPro" id="IPR036736">
    <property type="entry name" value="ACP-like_sf"/>
</dbReference>
<dbReference type="InterPro" id="IPR009081">
    <property type="entry name" value="PP-bd_ACP"/>
</dbReference>
<dbReference type="InterPro" id="IPR006162">
    <property type="entry name" value="Ppantetheine_attach_site"/>
</dbReference>
<dbReference type="NCBIfam" id="TIGR00517">
    <property type="entry name" value="acyl_carrier"/>
    <property type="match status" value="1"/>
</dbReference>
<dbReference type="NCBIfam" id="NF002148">
    <property type="entry name" value="PRK00982.1-2"/>
    <property type="match status" value="1"/>
</dbReference>
<dbReference type="NCBIfam" id="NF002149">
    <property type="entry name" value="PRK00982.1-3"/>
    <property type="match status" value="1"/>
</dbReference>
<dbReference type="NCBIfam" id="NF002150">
    <property type="entry name" value="PRK00982.1-4"/>
    <property type="match status" value="1"/>
</dbReference>
<dbReference type="NCBIfam" id="NF002151">
    <property type="entry name" value="PRK00982.1-5"/>
    <property type="match status" value="1"/>
</dbReference>
<dbReference type="PANTHER" id="PTHR20863">
    <property type="entry name" value="ACYL CARRIER PROTEIN"/>
    <property type="match status" value="1"/>
</dbReference>
<dbReference type="PANTHER" id="PTHR20863:SF76">
    <property type="entry name" value="CARRIER DOMAIN-CONTAINING PROTEIN"/>
    <property type="match status" value="1"/>
</dbReference>
<dbReference type="Pfam" id="PF00550">
    <property type="entry name" value="PP-binding"/>
    <property type="match status" value="1"/>
</dbReference>
<dbReference type="SUPFAM" id="SSF47336">
    <property type="entry name" value="ACP-like"/>
    <property type="match status" value="1"/>
</dbReference>
<dbReference type="PROSITE" id="PS50075">
    <property type="entry name" value="CARRIER"/>
    <property type="match status" value="1"/>
</dbReference>
<dbReference type="PROSITE" id="PS00012">
    <property type="entry name" value="PHOSPHOPANTETHEINE"/>
    <property type="match status" value="1"/>
</dbReference>
<keyword id="KW-0963">Cytoplasm</keyword>
<keyword id="KW-0275">Fatty acid biosynthesis</keyword>
<keyword id="KW-0276">Fatty acid metabolism</keyword>
<keyword id="KW-0444">Lipid biosynthesis</keyword>
<keyword id="KW-0443">Lipid metabolism</keyword>
<keyword id="KW-0596">Phosphopantetheine</keyword>
<keyword id="KW-0597">Phosphoprotein</keyword>
<evidence type="ECO:0000255" key="1">
    <source>
        <dbReference type="HAMAP-Rule" id="MF_01217"/>
    </source>
</evidence>
<evidence type="ECO:0000255" key="2">
    <source>
        <dbReference type="PROSITE-ProRule" id="PRU00258"/>
    </source>
</evidence>
<reference key="1">
    <citation type="submission" date="2008-06" db="EMBL/GenBank/DDBJ databases">
        <title>Complete sequence of Chlorobaculum parvum NCIB 8327.</title>
        <authorList>
            <consortium name="US DOE Joint Genome Institute"/>
            <person name="Lucas S."/>
            <person name="Copeland A."/>
            <person name="Lapidus A."/>
            <person name="Glavina del Rio T."/>
            <person name="Dalin E."/>
            <person name="Tice H."/>
            <person name="Bruce D."/>
            <person name="Goodwin L."/>
            <person name="Pitluck S."/>
            <person name="Schmutz J."/>
            <person name="Larimer F."/>
            <person name="Land M."/>
            <person name="Hauser L."/>
            <person name="Kyrpides N."/>
            <person name="Mikhailova N."/>
            <person name="Zhao F."/>
            <person name="Li T."/>
            <person name="Liu Z."/>
            <person name="Overmann J."/>
            <person name="Bryant D.A."/>
            <person name="Richardson P."/>
        </authorList>
    </citation>
    <scope>NUCLEOTIDE SEQUENCE [LARGE SCALE GENOMIC DNA]</scope>
    <source>
        <strain>DSM 263 / NCIMB 8327</strain>
    </source>
</reference>
<feature type="chain" id="PRO_1000139010" description="Acyl carrier protein">
    <location>
        <begin position="1"/>
        <end position="79"/>
    </location>
</feature>
<feature type="domain" description="Carrier" evidence="2">
    <location>
        <begin position="4"/>
        <end position="79"/>
    </location>
</feature>
<feature type="modified residue" description="O-(pantetheine 4'-phosphoryl)serine" evidence="2">
    <location>
        <position position="39"/>
    </location>
</feature>
<organism>
    <name type="scientific">Chlorobaculum parvum (strain DSM 263 / NCIMB 8327)</name>
    <name type="common">Chlorobium vibrioforme subsp. thiosulfatophilum</name>
    <dbReference type="NCBI Taxonomy" id="517417"/>
    <lineage>
        <taxon>Bacteria</taxon>
        <taxon>Pseudomonadati</taxon>
        <taxon>Chlorobiota</taxon>
        <taxon>Chlorobiia</taxon>
        <taxon>Chlorobiales</taxon>
        <taxon>Chlorobiaceae</taxon>
        <taxon>Chlorobaculum</taxon>
    </lineage>
</organism>